<organism>
    <name type="scientific">Yersinia enterocolitica</name>
    <dbReference type="NCBI Taxonomy" id="630"/>
    <lineage>
        <taxon>Bacteria</taxon>
        <taxon>Pseudomonadati</taxon>
        <taxon>Pseudomonadota</taxon>
        <taxon>Gammaproteobacteria</taxon>
        <taxon>Enterobacterales</taxon>
        <taxon>Yersiniaceae</taxon>
        <taxon>Yersinia</taxon>
    </lineage>
</organism>
<keyword id="KW-0614">Plasmid</keyword>
<keyword id="KW-0843">Virulence</keyword>
<proteinExistence type="evidence at transcript level"/>
<evidence type="ECO:0000256" key="1">
    <source>
        <dbReference type="SAM" id="MobiDB-lite"/>
    </source>
</evidence>
<accession>Q01254</accession>
<geneLocation type="plasmid">
    <name>pYV</name>
</geneLocation>
<gene>
    <name type="primary">yscM</name>
</gene>
<name>YSCM_YEREN</name>
<comment type="function">
    <text>Belongs to an operon involved in the translocation of Yop proteins across the bacterial membranes or in the specific control of this function.</text>
</comment>
<comment type="induction">
    <text>At 37 degrees Celsius in the absence of calcium.</text>
</comment>
<feature type="chain" id="PRO_0000066495" description="Yop proteins translocation protein M">
    <location>
        <begin position="1"/>
        <end position="115"/>
    </location>
</feature>
<feature type="region of interest" description="Disordered" evidence="1">
    <location>
        <begin position="19"/>
        <end position="39"/>
    </location>
</feature>
<feature type="compositionally biased region" description="Polar residues" evidence="1">
    <location>
        <begin position="27"/>
        <end position="39"/>
    </location>
</feature>
<reference key="1">
    <citation type="journal article" date="1991" name="J. Bacteriol.">
        <title>Analysis of virC, an operon involved in the secretion of Yop proteins by Yersinia enterocolitica.</title>
        <authorList>
            <person name="Michiels T."/>
            <person name="Vanooteghem J.-C."/>
            <person name="de Rouvroit C."/>
            <person name="China B."/>
            <person name="Gustin A."/>
            <person name="Boudry P."/>
            <person name="Cornelis G.R."/>
        </authorList>
    </citation>
    <scope>NUCLEOTIDE SEQUENCE [GENOMIC DNA]</scope>
    <source>
        <strain>439-80 / Serotype O:9</strain>
    </source>
</reference>
<dbReference type="EMBL" id="M74011">
    <property type="protein sequence ID" value="AAC37032.1"/>
    <property type="molecule type" value="Genomic_DNA"/>
</dbReference>
<dbReference type="PIR" id="D40049">
    <property type="entry name" value="D40049"/>
</dbReference>
<dbReference type="RefSeq" id="NP_783698.1">
    <property type="nucleotide sequence ID" value="NC_004564.1"/>
</dbReference>
<dbReference type="RefSeq" id="NP_863545.1">
    <property type="nucleotide sequence ID" value="NC_005017.1"/>
</dbReference>
<dbReference type="SMR" id="Q01254"/>
<dbReference type="GO" id="GO:0004725">
    <property type="term" value="F:protein tyrosine phosphatase activity"/>
    <property type="evidence" value="ECO:0007669"/>
    <property type="project" value="InterPro"/>
</dbReference>
<dbReference type="Gene3D" id="3.30.1570.10">
    <property type="entry name" value="Protein-tyrosine phosphatase, YopH, N-terminal domain"/>
    <property type="match status" value="1"/>
</dbReference>
<dbReference type="InterPro" id="IPR015103">
    <property type="entry name" value="ProtTyrPase_YopH_N"/>
</dbReference>
<dbReference type="InterPro" id="IPR036484">
    <property type="entry name" value="ProtTyrPase_YopH_N_sf"/>
</dbReference>
<dbReference type="NCBIfam" id="NF033924">
    <property type="entry name" value="T3SS_LcrQ_reg"/>
    <property type="match status" value="1"/>
</dbReference>
<dbReference type="Pfam" id="PF09013">
    <property type="entry name" value="YopH_N"/>
    <property type="match status" value="1"/>
</dbReference>
<dbReference type="SUPFAM" id="SSF64449">
    <property type="entry name" value="YopH tyrosine phosphatase N-terminal domain"/>
    <property type="match status" value="1"/>
</dbReference>
<sequence>MKINTLQSLINQQITQVGHGGQAGRLTETNPLTENSHQISTAEKAFASEVLEHVKNTALSRHDIACLLPRVSNLELKQGKAGEVIVTGLRTEQLSLSDAKLLLEAAMRQDTAADG</sequence>
<protein>
    <recommendedName>
        <fullName>Yop proteins translocation protein M</fullName>
    </recommendedName>
</protein>